<comment type="similarity">
    <text evidence="1">Belongs to the UPF0125 (RnfH) family.</text>
</comment>
<accession>Q1IF64</accession>
<reference key="1">
    <citation type="journal article" date="2006" name="Nat. Biotechnol.">
        <title>Complete genome sequence of the entomopathogenic and metabolically versatile soil bacterium Pseudomonas entomophila.</title>
        <authorList>
            <person name="Vodovar N."/>
            <person name="Vallenet D."/>
            <person name="Cruveiller S."/>
            <person name="Rouy Z."/>
            <person name="Barbe V."/>
            <person name="Acosta C."/>
            <person name="Cattolico L."/>
            <person name="Jubin C."/>
            <person name="Lajus A."/>
            <person name="Segurens B."/>
            <person name="Vacherie B."/>
            <person name="Wincker P."/>
            <person name="Weissenbach J."/>
            <person name="Lemaitre B."/>
            <person name="Medigue C."/>
            <person name="Boccard F."/>
        </authorList>
    </citation>
    <scope>NUCLEOTIDE SEQUENCE [LARGE SCALE GENOMIC DNA]</scope>
    <source>
        <strain>L48</strain>
    </source>
</reference>
<name>RNFH_PSEE4</name>
<feature type="chain" id="PRO_1000013586" description="Protein RnfH">
    <location>
        <begin position="1"/>
        <end position="102"/>
    </location>
</feature>
<proteinExistence type="inferred from homology"/>
<sequence>MAETSLRIEVVYATPERQWLLACEVPAGTSVSEALRLSGLAEQVPGLDLPGSPVGIFGKVVSEPAVRLVEEGDRLEVYRPLLADPKETRRQRAAKAKAARER</sequence>
<dbReference type="EMBL" id="CT573326">
    <property type="protein sequence ID" value="CAK13690.1"/>
    <property type="molecule type" value="Genomic_DNA"/>
</dbReference>
<dbReference type="RefSeq" id="WP_011532122.1">
    <property type="nucleotide sequence ID" value="NC_008027.1"/>
</dbReference>
<dbReference type="SMR" id="Q1IF64"/>
<dbReference type="STRING" id="384676.PSEEN0772"/>
<dbReference type="GeneID" id="32804080"/>
<dbReference type="KEGG" id="pen:PSEEN0772"/>
<dbReference type="eggNOG" id="COG2914">
    <property type="taxonomic scope" value="Bacteria"/>
</dbReference>
<dbReference type="HOGENOM" id="CLU_150721_1_0_6"/>
<dbReference type="OrthoDB" id="9796575at2"/>
<dbReference type="Proteomes" id="UP000000658">
    <property type="component" value="Chromosome"/>
</dbReference>
<dbReference type="Gene3D" id="3.10.20.280">
    <property type="entry name" value="RnfH-like"/>
    <property type="match status" value="1"/>
</dbReference>
<dbReference type="HAMAP" id="MF_00460">
    <property type="entry name" value="UPF0125_RnfH"/>
    <property type="match status" value="1"/>
</dbReference>
<dbReference type="InterPro" id="IPR016155">
    <property type="entry name" value="Mopterin_synth/thiamin_S_b"/>
</dbReference>
<dbReference type="InterPro" id="IPR005346">
    <property type="entry name" value="RnfH"/>
</dbReference>
<dbReference type="InterPro" id="IPR037021">
    <property type="entry name" value="RnfH_sf"/>
</dbReference>
<dbReference type="NCBIfam" id="NF002490">
    <property type="entry name" value="PRK01777.1"/>
    <property type="match status" value="1"/>
</dbReference>
<dbReference type="PANTHER" id="PTHR37483">
    <property type="entry name" value="UPF0125 PROTEIN RATB"/>
    <property type="match status" value="1"/>
</dbReference>
<dbReference type="PANTHER" id="PTHR37483:SF1">
    <property type="entry name" value="UPF0125 PROTEIN RATB"/>
    <property type="match status" value="1"/>
</dbReference>
<dbReference type="Pfam" id="PF03658">
    <property type="entry name" value="Ub-RnfH"/>
    <property type="match status" value="1"/>
</dbReference>
<dbReference type="SUPFAM" id="SSF54285">
    <property type="entry name" value="MoaD/ThiS"/>
    <property type="match status" value="1"/>
</dbReference>
<protein>
    <recommendedName>
        <fullName evidence="1">Protein RnfH</fullName>
    </recommendedName>
</protein>
<gene>
    <name evidence="1" type="primary">rnfH</name>
    <name type="ordered locus">PSEEN0772</name>
</gene>
<organism>
    <name type="scientific">Pseudomonas entomophila (strain L48)</name>
    <dbReference type="NCBI Taxonomy" id="384676"/>
    <lineage>
        <taxon>Bacteria</taxon>
        <taxon>Pseudomonadati</taxon>
        <taxon>Pseudomonadota</taxon>
        <taxon>Gammaproteobacteria</taxon>
        <taxon>Pseudomonadales</taxon>
        <taxon>Pseudomonadaceae</taxon>
        <taxon>Pseudomonas</taxon>
    </lineage>
</organism>
<evidence type="ECO:0000255" key="1">
    <source>
        <dbReference type="HAMAP-Rule" id="MF_00460"/>
    </source>
</evidence>